<proteinExistence type="inferred from homology"/>
<sequence>MINRQLSRLLLCSILGSTTLISGCALVRKDSAPHQQLKPEQIKLADDIHLASSGWPQAQWWKQLNDPQLDALIQRTLSGSHTLAEAKLREEKAQSQADLLDAGSQLQVAALGMLNRQRVSANGFLSPYAMDAPALGMDGPYYTEATVGLFAGLDLDLWGVHRSAVTAAIGAHNAALAETAAVELSLTTGVAQLYYSMQASYQMLDLLEQTRDVIDYAVKAHQSKVAHGLEAQVPFHGARAQILAVDKQIAAVKGQITETRESLRALIGAGASDMPEIKPVALPRVQTGIPATLSYELLARRPDLQAMRWYVQASLDQVDSARALFYPSFDIKAFFGLDSIHLDTLFKKTSRQFNFIPGLKLPLFDGGRLNANLEGTRAASNMMIERYNQSVLNAVRDVAVNGTRLQTLNDEREMQAERVEATRFTQRAAEAAYQRGLTSRLQATEARLPVLAEEMSLLMLDSRRVIQSIQLMKSLGSGYQAAPVVEKK</sequence>
<gene>
    <name type="primary">mdtP</name>
    <name type="ordered locus">Z5680</name>
    <name type="ordered locus">ECs5062</name>
</gene>
<comment type="function">
    <text evidence="1">Could be involved in resistance to puromycin, acriflavine and tetraphenylarsonium chloride.</text>
</comment>
<comment type="subunit">
    <text evidence="1">Could be part of a tripartite efflux system composed of MdtN, MdtO and MdtP.</text>
</comment>
<comment type="subcellular location">
    <subcellularLocation>
        <location evidence="3">Cell outer membrane</location>
        <topology evidence="2">Lipid-anchor</topology>
    </subcellularLocation>
</comment>
<comment type="similarity">
    <text evidence="3">Belongs to the outer membrane factor (OMF) (TC 1.B.17) family.</text>
</comment>
<evidence type="ECO:0000250" key="1"/>
<evidence type="ECO:0000255" key="2">
    <source>
        <dbReference type="PROSITE-ProRule" id="PRU00303"/>
    </source>
</evidence>
<evidence type="ECO:0000305" key="3"/>
<keyword id="KW-0046">Antibiotic resistance</keyword>
<keyword id="KW-0998">Cell outer membrane</keyword>
<keyword id="KW-0449">Lipoprotein</keyword>
<keyword id="KW-0472">Membrane</keyword>
<keyword id="KW-0564">Palmitate</keyword>
<keyword id="KW-1185">Reference proteome</keyword>
<keyword id="KW-0732">Signal</keyword>
<keyword id="KW-0812">Transmembrane</keyword>
<keyword id="KW-1134">Transmembrane beta strand</keyword>
<dbReference type="EMBL" id="AE005174">
    <property type="protein sequence ID" value="AAG59278.1"/>
    <property type="molecule type" value="Genomic_DNA"/>
</dbReference>
<dbReference type="EMBL" id="BA000007">
    <property type="protein sequence ID" value="BAB38485.1"/>
    <property type="molecule type" value="Genomic_DNA"/>
</dbReference>
<dbReference type="PIR" id="B86102">
    <property type="entry name" value="B86102"/>
</dbReference>
<dbReference type="PIR" id="F91261">
    <property type="entry name" value="F91261"/>
</dbReference>
<dbReference type="RefSeq" id="NP_313089.1">
    <property type="nucleotide sequence ID" value="NC_002695.1"/>
</dbReference>
<dbReference type="RefSeq" id="WP_000610591.1">
    <property type="nucleotide sequence ID" value="NZ_VOAI01000008.1"/>
</dbReference>
<dbReference type="SMR" id="Q8X5R9"/>
<dbReference type="STRING" id="155864.Z5680"/>
<dbReference type="GeneID" id="914272"/>
<dbReference type="KEGG" id="ece:Z5680"/>
<dbReference type="KEGG" id="ecs:ECs_5062"/>
<dbReference type="PATRIC" id="fig|386585.9.peg.5290"/>
<dbReference type="eggNOG" id="COG1538">
    <property type="taxonomic scope" value="Bacteria"/>
</dbReference>
<dbReference type="HOGENOM" id="CLU_012817_6_3_6"/>
<dbReference type="OMA" id="TRALEHM"/>
<dbReference type="Proteomes" id="UP000000558">
    <property type="component" value="Chromosome"/>
</dbReference>
<dbReference type="Proteomes" id="UP000002519">
    <property type="component" value="Chromosome"/>
</dbReference>
<dbReference type="GO" id="GO:0009279">
    <property type="term" value="C:cell outer membrane"/>
    <property type="evidence" value="ECO:0007669"/>
    <property type="project" value="UniProtKB-SubCell"/>
</dbReference>
<dbReference type="GO" id="GO:0015562">
    <property type="term" value="F:efflux transmembrane transporter activity"/>
    <property type="evidence" value="ECO:0007669"/>
    <property type="project" value="InterPro"/>
</dbReference>
<dbReference type="GO" id="GO:0046677">
    <property type="term" value="P:response to antibiotic"/>
    <property type="evidence" value="ECO:0007669"/>
    <property type="project" value="UniProtKB-KW"/>
</dbReference>
<dbReference type="Gene3D" id="1.20.1600.10">
    <property type="entry name" value="Outer membrane efflux proteins (OEP)"/>
    <property type="match status" value="1"/>
</dbReference>
<dbReference type="Gene3D" id="2.20.200.10">
    <property type="entry name" value="Outer membrane efflux proteins (OEP)"/>
    <property type="match status" value="1"/>
</dbReference>
<dbReference type="InterPro" id="IPR050737">
    <property type="entry name" value="OMF"/>
</dbReference>
<dbReference type="InterPro" id="IPR003423">
    <property type="entry name" value="OMP_efflux"/>
</dbReference>
<dbReference type="InterPro" id="IPR010131">
    <property type="entry name" value="RND_efflux_OM_lipoprot_NodT"/>
</dbReference>
<dbReference type="NCBIfam" id="TIGR01845">
    <property type="entry name" value="outer_NodT"/>
    <property type="match status" value="1"/>
</dbReference>
<dbReference type="NCBIfam" id="NF007390">
    <property type="entry name" value="PRK09915.1"/>
    <property type="match status" value="1"/>
</dbReference>
<dbReference type="PANTHER" id="PTHR30203:SF20">
    <property type="entry name" value="MULTIDRUG RESISTANCE OUTER MEMBRANE PROTEIN MDTP-RELATED"/>
    <property type="match status" value="1"/>
</dbReference>
<dbReference type="PANTHER" id="PTHR30203">
    <property type="entry name" value="OUTER MEMBRANE CATION EFFLUX PROTEIN"/>
    <property type="match status" value="1"/>
</dbReference>
<dbReference type="Pfam" id="PF02321">
    <property type="entry name" value="OEP"/>
    <property type="match status" value="2"/>
</dbReference>
<dbReference type="SUPFAM" id="SSF56954">
    <property type="entry name" value="Outer membrane efflux proteins (OEP)"/>
    <property type="match status" value="1"/>
</dbReference>
<dbReference type="PROSITE" id="PS51257">
    <property type="entry name" value="PROKAR_LIPOPROTEIN"/>
    <property type="match status" value="1"/>
</dbReference>
<name>MDTP_ECO57</name>
<organism>
    <name type="scientific">Escherichia coli O157:H7</name>
    <dbReference type="NCBI Taxonomy" id="83334"/>
    <lineage>
        <taxon>Bacteria</taxon>
        <taxon>Pseudomonadati</taxon>
        <taxon>Pseudomonadota</taxon>
        <taxon>Gammaproteobacteria</taxon>
        <taxon>Enterobacterales</taxon>
        <taxon>Enterobacteriaceae</taxon>
        <taxon>Escherichia</taxon>
    </lineage>
</organism>
<accession>Q8X5R9</accession>
<accession>Q7A915</accession>
<reference key="1">
    <citation type="journal article" date="2001" name="Nature">
        <title>Genome sequence of enterohaemorrhagic Escherichia coli O157:H7.</title>
        <authorList>
            <person name="Perna N.T."/>
            <person name="Plunkett G. III"/>
            <person name="Burland V."/>
            <person name="Mau B."/>
            <person name="Glasner J.D."/>
            <person name="Rose D.J."/>
            <person name="Mayhew G.F."/>
            <person name="Evans P.S."/>
            <person name="Gregor J."/>
            <person name="Kirkpatrick H.A."/>
            <person name="Posfai G."/>
            <person name="Hackett J."/>
            <person name="Klink S."/>
            <person name="Boutin A."/>
            <person name="Shao Y."/>
            <person name="Miller L."/>
            <person name="Grotbeck E.J."/>
            <person name="Davis N.W."/>
            <person name="Lim A."/>
            <person name="Dimalanta E.T."/>
            <person name="Potamousis K."/>
            <person name="Apodaca J."/>
            <person name="Anantharaman T.S."/>
            <person name="Lin J."/>
            <person name="Yen G."/>
            <person name="Schwartz D.C."/>
            <person name="Welch R.A."/>
            <person name="Blattner F.R."/>
        </authorList>
    </citation>
    <scope>NUCLEOTIDE SEQUENCE [LARGE SCALE GENOMIC DNA]</scope>
    <source>
        <strain>O157:H7 / EDL933 / ATCC 700927 / EHEC</strain>
    </source>
</reference>
<reference key="2">
    <citation type="journal article" date="2001" name="DNA Res.">
        <title>Complete genome sequence of enterohemorrhagic Escherichia coli O157:H7 and genomic comparison with a laboratory strain K-12.</title>
        <authorList>
            <person name="Hayashi T."/>
            <person name="Makino K."/>
            <person name="Ohnishi M."/>
            <person name="Kurokawa K."/>
            <person name="Ishii K."/>
            <person name="Yokoyama K."/>
            <person name="Han C.-G."/>
            <person name="Ohtsubo E."/>
            <person name="Nakayama K."/>
            <person name="Murata T."/>
            <person name="Tanaka M."/>
            <person name="Tobe T."/>
            <person name="Iida T."/>
            <person name="Takami H."/>
            <person name="Honda T."/>
            <person name="Sasakawa C."/>
            <person name="Ogasawara N."/>
            <person name="Yasunaga T."/>
            <person name="Kuhara S."/>
            <person name="Shiba T."/>
            <person name="Hattori M."/>
            <person name="Shinagawa H."/>
        </authorList>
    </citation>
    <scope>NUCLEOTIDE SEQUENCE [LARGE SCALE GENOMIC DNA]</scope>
    <source>
        <strain>O157:H7 / Sakai / RIMD 0509952 / EHEC</strain>
    </source>
</reference>
<feature type="signal peptide" evidence="2">
    <location>
        <begin position="1"/>
        <end position="23"/>
    </location>
</feature>
<feature type="chain" id="PRO_0000031010" description="Multidrug resistance outer membrane protein MdtP">
    <location>
        <begin position="24"/>
        <end position="488"/>
    </location>
</feature>
<feature type="lipid moiety-binding region" description="N-palmitoyl cysteine" evidence="2">
    <location>
        <position position="24"/>
    </location>
</feature>
<feature type="lipid moiety-binding region" description="S-diacylglycerol cysteine" evidence="2">
    <location>
        <position position="24"/>
    </location>
</feature>
<protein>
    <recommendedName>
        <fullName>Multidrug resistance outer membrane protein MdtP</fullName>
    </recommendedName>
</protein>